<organism>
    <name type="scientific">Listeria monocytogenes serotype 4b (strain F2365)</name>
    <dbReference type="NCBI Taxonomy" id="265669"/>
    <lineage>
        <taxon>Bacteria</taxon>
        <taxon>Bacillati</taxon>
        <taxon>Bacillota</taxon>
        <taxon>Bacilli</taxon>
        <taxon>Bacillales</taxon>
        <taxon>Listeriaceae</taxon>
        <taxon>Listeria</taxon>
    </lineage>
</organism>
<reference key="1">
    <citation type="journal article" date="2004" name="Nucleic Acids Res.">
        <title>Whole genome comparisons of serotype 4b and 1/2a strains of the food-borne pathogen Listeria monocytogenes reveal new insights into the core genome components of this species.</title>
        <authorList>
            <person name="Nelson K.E."/>
            <person name="Fouts D.E."/>
            <person name="Mongodin E.F."/>
            <person name="Ravel J."/>
            <person name="DeBoy R.T."/>
            <person name="Kolonay J.F."/>
            <person name="Rasko D.A."/>
            <person name="Angiuoli S.V."/>
            <person name="Gill S.R."/>
            <person name="Paulsen I.T."/>
            <person name="Peterson J.D."/>
            <person name="White O."/>
            <person name="Nelson W.C."/>
            <person name="Nierman W.C."/>
            <person name="Beanan M.J."/>
            <person name="Brinkac L.M."/>
            <person name="Daugherty S.C."/>
            <person name="Dodson R.J."/>
            <person name="Durkin A.S."/>
            <person name="Madupu R."/>
            <person name="Haft D.H."/>
            <person name="Selengut J."/>
            <person name="Van Aken S.E."/>
            <person name="Khouri H.M."/>
            <person name="Fedorova N."/>
            <person name="Forberger H.A."/>
            <person name="Tran B."/>
            <person name="Kathariou S."/>
            <person name="Wonderling L.D."/>
            <person name="Uhlich G.A."/>
            <person name="Bayles D.O."/>
            <person name="Luchansky J.B."/>
            <person name="Fraser C.M."/>
        </authorList>
    </citation>
    <scope>NUCLEOTIDE SEQUENCE [LARGE SCALE GENOMIC DNA]</scope>
    <source>
        <strain>F2365</strain>
    </source>
</reference>
<keyword id="KW-0067">ATP-binding</keyword>
<keyword id="KW-1003">Cell membrane</keyword>
<keyword id="KW-0472">Membrane</keyword>
<keyword id="KW-0547">Nucleotide-binding</keyword>
<keyword id="KW-1278">Translocase</keyword>
<keyword id="KW-0813">Transport</keyword>
<feature type="chain" id="PRO_0000092030" description="Putative ABC transporter ATP-binding protein LMOf2365_1216">
    <location>
        <begin position="1"/>
        <end position="268"/>
    </location>
</feature>
<feature type="domain" description="ABC transporter" evidence="2">
    <location>
        <begin position="2"/>
        <end position="237"/>
    </location>
</feature>
<feature type="binding site" evidence="2">
    <location>
        <begin position="35"/>
        <end position="42"/>
    </location>
    <ligand>
        <name>ATP</name>
        <dbReference type="ChEBI" id="CHEBI:30616"/>
    </ligand>
</feature>
<gene>
    <name type="ordered locus">LMOf2365_1216</name>
</gene>
<evidence type="ECO:0000250" key="1"/>
<evidence type="ECO:0000255" key="2">
    <source>
        <dbReference type="PROSITE-ProRule" id="PRU00434"/>
    </source>
</evidence>
<evidence type="ECO:0000305" key="3"/>
<name>Y1216_LISMF</name>
<dbReference type="EC" id="7.-.-.-"/>
<dbReference type="EMBL" id="AE017262">
    <property type="protein sequence ID" value="AAT03992.1"/>
    <property type="molecule type" value="Genomic_DNA"/>
</dbReference>
<dbReference type="RefSeq" id="WP_003724739.1">
    <property type="nucleotide sequence ID" value="NC_002973.6"/>
</dbReference>
<dbReference type="SMR" id="Q720M2"/>
<dbReference type="KEGG" id="lmf:LMOf2365_1216"/>
<dbReference type="HOGENOM" id="CLU_000604_1_22_9"/>
<dbReference type="GO" id="GO:0043190">
    <property type="term" value="C:ATP-binding cassette (ABC) transporter complex"/>
    <property type="evidence" value="ECO:0007669"/>
    <property type="project" value="TreeGrafter"/>
</dbReference>
<dbReference type="GO" id="GO:0005524">
    <property type="term" value="F:ATP binding"/>
    <property type="evidence" value="ECO:0007669"/>
    <property type="project" value="UniProtKB-KW"/>
</dbReference>
<dbReference type="GO" id="GO:0016887">
    <property type="term" value="F:ATP hydrolysis activity"/>
    <property type="evidence" value="ECO:0007669"/>
    <property type="project" value="InterPro"/>
</dbReference>
<dbReference type="GO" id="GO:0042626">
    <property type="term" value="F:ATPase-coupled transmembrane transporter activity"/>
    <property type="evidence" value="ECO:0007669"/>
    <property type="project" value="TreeGrafter"/>
</dbReference>
<dbReference type="GO" id="GO:0006824">
    <property type="term" value="P:cobalt ion transport"/>
    <property type="evidence" value="ECO:0007669"/>
    <property type="project" value="InterPro"/>
</dbReference>
<dbReference type="CDD" id="cd03225">
    <property type="entry name" value="ABC_cobalt_CbiO_domain1"/>
    <property type="match status" value="1"/>
</dbReference>
<dbReference type="FunFam" id="3.40.50.300:FF:000224">
    <property type="entry name" value="Energy-coupling factor transporter ATP-binding protein EcfA"/>
    <property type="match status" value="1"/>
</dbReference>
<dbReference type="Gene3D" id="3.40.50.300">
    <property type="entry name" value="P-loop containing nucleotide triphosphate hydrolases"/>
    <property type="match status" value="1"/>
</dbReference>
<dbReference type="InterPro" id="IPR003593">
    <property type="entry name" value="AAA+_ATPase"/>
</dbReference>
<dbReference type="InterPro" id="IPR003439">
    <property type="entry name" value="ABC_transporter-like_ATP-bd"/>
</dbReference>
<dbReference type="InterPro" id="IPR017871">
    <property type="entry name" value="ABC_transporter-like_CS"/>
</dbReference>
<dbReference type="InterPro" id="IPR015856">
    <property type="entry name" value="ABC_transpr_CbiO/EcfA_su"/>
</dbReference>
<dbReference type="InterPro" id="IPR005876">
    <property type="entry name" value="Co_trans_ATP-bd"/>
</dbReference>
<dbReference type="InterPro" id="IPR050095">
    <property type="entry name" value="ECF_ABC_transporter_ATP-bd"/>
</dbReference>
<dbReference type="InterPro" id="IPR027417">
    <property type="entry name" value="P-loop_NTPase"/>
</dbReference>
<dbReference type="NCBIfam" id="TIGR01166">
    <property type="entry name" value="cbiO"/>
    <property type="match status" value="1"/>
</dbReference>
<dbReference type="PANTHER" id="PTHR43553:SF24">
    <property type="entry name" value="ENERGY-COUPLING FACTOR TRANSPORTER ATP-BINDING PROTEIN ECFA1"/>
    <property type="match status" value="1"/>
</dbReference>
<dbReference type="PANTHER" id="PTHR43553">
    <property type="entry name" value="HEAVY METAL TRANSPORTER"/>
    <property type="match status" value="1"/>
</dbReference>
<dbReference type="Pfam" id="PF00005">
    <property type="entry name" value="ABC_tran"/>
    <property type="match status" value="1"/>
</dbReference>
<dbReference type="SMART" id="SM00382">
    <property type="entry name" value="AAA"/>
    <property type="match status" value="1"/>
</dbReference>
<dbReference type="SUPFAM" id="SSF52540">
    <property type="entry name" value="P-loop containing nucleoside triphosphate hydrolases"/>
    <property type="match status" value="1"/>
</dbReference>
<dbReference type="PROSITE" id="PS00211">
    <property type="entry name" value="ABC_TRANSPORTER_1"/>
    <property type="match status" value="1"/>
</dbReference>
<dbReference type="PROSITE" id="PS50893">
    <property type="entry name" value="ABC_TRANSPORTER_2"/>
    <property type="match status" value="1"/>
</dbReference>
<protein>
    <recommendedName>
        <fullName>Putative ABC transporter ATP-binding protein LMOf2365_1216</fullName>
        <ecNumber>7.-.-.-</ecNumber>
    </recommendedName>
</protein>
<comment type="function">
    <text evidence="1">Probably part of an ABC transporter complex. Responsible for energy coupling to the transport system (By similarity).</text>
</comment>
<comment type="subcellular location">
    <subcellularLocation>
        <location evidence="1">Cell membrane</location>
        <topology evidence="1">Peripheral membrane protein</topology>
    </subcellularLocation>
</comment>
<comment type="similarity">
    <text evidence="3">Belongs to the ABC transporter superfamily.</text>
</comment>
<sequence length="268" mass="29835">MLKTEHISFQYEDGKQALTDVSIDLEKGNIIGLIGANGSGKSTLFMQLLGINKPSDGTVYFEGKPLAYTKKALFALRKKVSIVFQDPDQQIFYSNVRDDVAFALRNLGVSETEVEARVTKVLDIVGAKDFQHKPVQYLSYGQKKRVAIAGALVLDTDWLLLDEPTAGLDPIGKKIMMEIIERLASQGKKILISSHDIDLIYEICDYVYMLKDGSVLTDGETSNVFLEKSNVEQAGLVQPWLIKLHQQAGYPLFKKEADFFAHTGKVTN</sequence>
<accession>Q720M2</accession>
<proteinExistence type="inferred from homology"/>